<keyword id="KW-0002">3D-structure</keyword>
<keyword id="KW-0687">Ribonucleoprotein</keyword>
<keyword id="KW-0689">Ribosomal protein</keyword>
<keyword id="KW-0694">RNA-binding</keyword>
<keyword id="KW-0699">rRNA-binding</keyword>
<accession>Q2YYP7</accession>
<name>RL4_STAAB</name>
<evidence type="ECO:0000255" key="1">
    <source>
        <dbReference type="HAMAP-Rule" id="MF_01328"/>
    </source>
</evidence>
<evidence type="ECO:0000256" key="2">
    <source>
        <dbReference type="SAM" id="MobiDB-lite"/>
    </source>
</evidence>
<evidence type="ECO:0000305" key="3"/>
<protein>
    <recommendedName>
        <fullName evidence="1">Large ribosomal subunit protein uL4</fullName>
    </recommendedName>
    <alternativeName>
        <fullName evidence="3">50S ribosomal protein L4</fullName>
    </alternativeName>
</protein>
<proteinExistence type="evidence at protein level"/>
<organism>
    <name type="scientific">Staphylococcus aureus (strain bovine RF122 / ET3-1)</name>
    <dbReference type="NCBI Taxonomy" id="273036"/>
    <lineage>
        <taxon>Bacteria</taxon>
        <taxon>Bacillati</taxon>
        <taxon>Bacillota</taxon>
        <taxon>Bacilli</taxon>
        <taxon>Bacillales</taxon>
        <taxon>Staphylococcaceae</taxon>
        <taxon>Staphylococcus</taxon>
    </lineage>
</organism>
<feature type="chain" id="PRO_0000242441" description="Large ribosomal subunit protein uL4">
    <location>
        <begin position="1"/>
        <end position="207"/>
    </location>
</feature>
<feature type="region of interest" description="Disordered" evidence="2">
    <location>
        <begin position="50"/>
        <end position="76"/>
    </location>
</feature>
<reference key="1">
    <citation type="journal article" date="2007" name="PLoS ONE">
        <title>Molecular correlates of host specialization in Staphylococcus aureus.</title>
        <authorList>
            <person name="Herron-Olson L."/>
            <person name="Fitzgerald J.R."/>
            <person name="Musser J.M."/>
            <person name="Kapur V."/>
        </authorList>
    </citation>
    <scope>NUCLEOTIDE SEQUENCE [LARGE SCALE GENOMIC DNA]</scope>
    <source>
        <strain>bovine RF122 / ET3-1</strain>
    </source>
</reference>
<dbReference type="EMBL" id="AJ938182">
    <property type="protein sequence ID" value="CAI81810.1"/>
    <property type="molecule type" value="Genomic_DNA"/>
</dbReference>
<dbReference type="RefSeq" id="WP_000024827.1">
    <property type="nucleotide sequence ID" value="NC_007622.1"/>
</dbReference>
<dbReference type="PDB" id="6FXC">
    <property type="method" value="EM"/>
    <property type="resolution" value="6.76 A"/>
    <property type="chains" value="AE/BE=2-207"/>
</dbReference>
<dbReference type="PDBsum" id="6FXC"/>
<dbReference type="EMDB" id="EMD-0243"/>
<dbReference type="EMDB" id="EMD-3637"/>
<dbReference type="SMR" id="Q2YYP7"/>
<dbReference type="KEGG" id="sab:SAB2121c"/>
<dbReference type="HOGENOM" id="CLU_041575_5_2_9"/>
<dbReference type="GO" id="GO:1990904">
    <property type="term" value="C:ribonucleoprotein complex"/>
    <property type="evidence" value="ECO:0007669"/>
    <property type="project" value="UniProtKB-KW"/>
</dbReference>
<dbReference type="GO" id="GO:0005840">
    <property type="term" value="C:ribosome"/>
    <property type="evidence" value="ECO:0007669"/>
    <property type="project" value="UniProtKB-KW"/>
</dbReference>
<dbReference type="GO" id="GO:0019843">
    <property type="term" value="F:rRNA binding"/>
    <property type="evidence" value="ECO:0007669"/>
    <property type="project" value="UniProtKB-UniRule"/>
</dbReference>
<dbReference type="GO" id="GO:0003735">
    <property type="term" value="F:structural constituent of ribosome"/>
    <property type="evidence" value="ECO:0007669"/>
    <property type="project" value="InterPro"/>
</dbReference>
<dbReference type="GO" id="GO:0006412">
    <property type="term" value="P:translation"/>
    <property type="evidence" value="ECO:0007669"/>
    <property type="project" value="UniProtKB-UniRule"/>
</dbReference>
<dbReference type="FunFam" id="3.40.1370.10:FF:000003">
    <property type="entry name" value="50S ribosomal protein L4"/>
    <property type="match status" value="1"/>
</dbReference>
<dbReference type="Gene3D" id="3.40.1370.10">
    <property type="match status" value="1"/>
</dbReference>
<dbReference type="HAMAP" id="MF_01328_B">
    <property type="entry name" value="Ribosomal_uL4_B"/>
    <property type="match status" value="1"/>
</dbReference>
<dbReference type="InterPro" id="IPR002136">
    <property type="entry name" value="Ribosomal_uL4"/>
</dbReference>
<dbReference type="InterPro" id="IPR013005">
    <property type="entry name" value="Ribosomal_uL4-like"/>
</dbReference>
<dbReference type="InterPro" id="IPR023574">
    <property type="entry name" value="Ribosomal_uL4_dom_sf"/>
</dbReference>
<dbReference type="NCBIfam" id="TIGR03953">
    <property type="entry name" value="rplD_bact"/>
    <property type="match status" value="1"/>
</dbReference>
<dbReference type="PANTHER" id="PTHR10746">
    <property type="entry name" value="50S RIBOSOMAL PROTEIN L4"/>
    <property type="match status" value="1"/>
</dbReference>
<dbReference type="PANTHER" id="PTHR10746:SF6">
    <property type="entry name" value="LARGE RIBOSOMAL SUBUNIT PROTEIN UL4M"/>
    <property type="match status" value="1"/>
</dbReference>
<dbReference type="Pfam" id="PF00573">
    <property type="entry name" value="Ribosomal_L4"/>
    <property type="match status" value="1"/>
</dbReference>
<dbReference type="SUPFAM" id="SSF52166">
    <property type="entry name" value="Ribosomal protein L4"/>
    <property type="match status" value="1"/>
</dbReference>
<gene>
    <name evidence="1" type="primary">rplD</name>
    <name type="ordered locus">SAB2121c</name>
</gene>
<comment type="function">
    <text evidence="1">One of the primary rRNA binding proteins, this protein initially binds near the 5'-end of the 23S rRNA. It is important during the early stages of 50S assembly. It makes multiple contacts with different domains of the 23S rRNA in the assembled 50S subunit and ribosome.</text>
</comment>
<comment type="function">
    <text evidence="1">Forms part of the polypeptide exit tunnel.</text>
</comment>
<comment type="subunit">
    <text evidence="1">Part of the 50S ribosomal subunit.</text>
</comment>
<comment type="similarity">
    <text evidence="1">Belongs to the universal ribosomal protein uL4 family.</text>
</comment>
<sequence length="207" mass="22465">MANYDVLKLDGTKSGSIELSDAVFGIEPNNSVLFEAINLQRASLRQGTHAVKNRSAVSGGGRKPWKQKGTGRARQGTIRAPQWRGGGIVFGPTPRSYAYKMPKKMRRLALRSALSFKAQENGLTVVDAFNFEAPKTKEFKNVLSTLEQPKKVLVVTENEDVNVELSARNIPGVQVTTAQGLNVLDITNADSLVITEAAAKKVEEVLG</sequence>